<evidence type="ECO:0000255" key="1">
    <source>
        <dbReference type="HAMAP-Rule" id="MF_00168"/>
    </source>
</evidence>
<comment type="function">
    <text evidence="1">Catalyzes the base-exchange of a guanine (G) residue with the queuine precursor 7-aminomethyl-7-deazaguanine (PreQ1) at position 34 (anticodon wobble position) in tRNAs with GU(N) anticodons (tRNA-Asp, -Asn, -His and -Tyr). Catalysis occurs through a double-displacement mechanism. The nucleophile active site attacks the C1' of nucleotide 34 to detach the guanine base from the RNA, forming a covalent enzyme-RNA intermediate. The proton acceptor active site deprotonates the incoming PreQ1, allowing a nucleophilic attack on the C1' of the ribose to form the product. After dissociation, two additional enzymatic reactions on the tRNA convert PreQ1 to queuine (Q), resulting in the hypermodified nucleoside queuosine (7-(((4,5-cis-dihydroxy-2-cyclopenten-1-yl)amino)methyl)-7-deazaguanosine).</text>
</comment>
<comment type="catalytic activity">
    <reaction evidence="1">
        <text>7-aminomethyl-7-carbaguanine + guanosine(34) in tRNA = 7-aminomethyl-7-carbaguanosine(34) in tRNA + guanine</text>
        <dbReference type="Rhea" id="RHEA:24104"/>
        <dbReference type="Rhea" id="RHEA-COMP:10341"/>
        <dbReference type="Rhea" id="RHEA-COMP:10342"/>
        <dbReference type="ChEBI" id="CHEBI:16235"/>
        <dbReference type="ChEBI" id="CHEBI:58703"/>
        <dbReference type="ChEBI" id="CHEBI:74269"/>
        <dbReference type="ChEBI" id="CHEBI:82833"/>
        <dbReference type="EC" id="2.4.2.29"/>
    </reaction>
</comment>
<comment type="cofactor">
    <cofactor evidence="1">
        <name>Zn(2+)</name>
        <dbReference type="ChEBI" id="CHEBI:29105"/>
    </cofactor>
    <text evidence="1">Binds 1 zinc ion per subunit.</text>
</comment>
<comment type="pathway">
    <text evidence="1">tRNA modification; tRNA-queuosine biosynthesis.</text>
</comment>
<comment type="subunit">
    <text evidence="1">Homodimer. Within each dimer, one monomer is responsible for RNA recognition and catalysis, while the other monomer binds to the replacement base PreQ1.</text>
</comment>
<comment type="similarity">
    <text evidence="1">Belongs to the queuine tRNA-ribosyltransferase family.</text>
</comment>
<organism>
    <name type="scientific">Erwinia tasmaniensis (strain DSM 17950 / CFBP 7177 / CIP 109463 / NCPPB 4357 / Et1/99)</name>
    <dbReference type="NCBI Taxonomy" id="465817"/>
    <lineage>
        <taxon>Bacteria</taxon>
        <taxon>Pseudomonadati</taxon>
        <taxon>Pseudomonadota</taxon>
        <taxon>Gammaproteobacteria</taxon>
        <taxon>Enterobacterales</taxon>
        <taxon>Erwiniaceae</taxon>
        <taxon>Erwinia</taxon>
    </lineage>
</organism>
<sequence>MKFELDTTDGRARRGRLVFERGVVETPAFMPVGTYGTVKGMTPEEVQDTGAQIILGNTFHLWLRPGQEIMKLHGDLHDFMQWKGPILTDSGGFQVFSLGDIRKITEKGVHFRNPINGDAIFLDPEKSMEIQYDLGSDIVMIFDECTPYPADWDYAKRSMEMSLRWAQRSRDRFDSLGNKNALFGIIQGSVYEDLRDVSVKGLVDIGFDGYAVGGLAVGEPKEDMHRILEHVCPQLPQDKPRYLMGVGKPQDLVEGVRRGVDMFDCVMPTRNARNGHLFVSDGVVKIRNAKYKDDISPLDAECDCYTCRNYSRAYLYHLDRCNEILGARLNTIHNLRYYQRLMAGLRQAIEEGKLEHFVSEFYQRTGAAVPPITSDN</sequence>
<feature type="chain" id="PRO_1000097544" description="Queuine tRNA-ribosyltransferase">
    <location>
        <begin position="1"/>
        <end position="376"/>
    </location>
</feature>
<feature type="region of interest" description="RNA binding" evidence="1">
    <location>
        <begin position="245"/>
        <end position="251"/>
    </location>
</feature>
<feature type="region of interest" description="RNA binding; important for wobble base 34 recognition" evidence="1">
    <location>
        <begin position="269"/>
        <end position="273"/>
    </location>
</feature>
<feature type="active site" description="Proton acceptor" evidence="1">
    <location>
        <position position="89"/>
    </location>
</feature>
<feature type="active site" description="Nucleophile" evidence="1">
    <location>
        <position position="264"/>
    </location>
</feature>
<feature type="binding site" evidence="1">
    <location>
        <begin position="89"/>
        <end position="93"/>
    </location>
    <ligand>
        <name>substrate</name>
    </ligand>
</feature>
<feature type="binding site" evidence="1">
    <location>
        <position position="143"/>
    </location>
    <ligand>
        <name>substrate</name>
    </ligand>
</feature>
<feature type="binding site" evidence="1">
    <location>
        <position position="187"/>
    </location>
    <ligand>
        <name>substrate</name>
    </ligand>
</feature>
<feature type="binding site" evidence="1">
    <location>
        <position position="214"/>
    </location>
    <ligand>
        <name>substrate</name>
    </ligand>
</feature>
<feature type="binding site" evidence="1">
    <location>
        <position position="302"/>
    </location>
    <ligand>
        <name>Zn(2+)</name>
        <dbReference type="ChEBI" id="CHEBI:29105"/>
    </ligand>
</feature>
<feature type="binding site" evidence="1">
    <location>
        <position position="304"/>
    </location>
    <ligand>
        <name>Zn(2+)</name>
        <dbReference type="ChEBI" id="CHEBI:29105"/>
    </ligand>
</feature>
<feature type="binding site" evidence="1">
    <location>
        <position position="307"/>
    </location>
    <ligand>
        <name>Zn(2+)</name>
        <dbReference type="ChEBI" id="CHEBI:29105"/>
    </ligand>
</feature>
<feature type="binding site" evidence="1">
    <location>
        <position position="333"/>
    </location>
    <ligand>
        <name>Zn(2+)</name>
        <dbReference type="ChEBI" id="CHEBI:29105"/>
    </ligand>
</feature>
<dbReference type="EC" id="2.4.2.29" evidence="1"/>
<dbReference type="EMBL" id="CU468135">
    <property type="protein sequence ID" value="CAO97585.1"/>
    <property type="molecule type" value="Genomic_DNA"/>
</dbReference>
<dbReference type="RefSeq" id="WP_012442250.1">
    <property type="nucleotide sequence ID" value="NC_010694.1"/>
</dbReference>
<dbReference type="SMR" id="B2VHQ1"/>
<dbReference type="STRING" id="465817.ETA_25390"/>
<dbReference type="KEGG" id="eta:ETA_25390"/>
<dbReference type="eggNOG" id="COG0343">
    <property type="taxonomic scope" value="Bacteria"/>
</dbReference>
<dbReference type="HOGENOM" id="CLU_022060_0_1_6"/>
<dbReference type="OrthoDB" id="9805417at2"/>
<dbReference type="UniPathway" id="UPA00392"/>
<dbReference type="Proteomes" id="UP000001726">
    <property type="component" value="Chromosome"/>
</dbReference>
<dbReference type="GO" id="GO:0005829">
    <property type="term" value="C:cytosol"/>
    <property type="evidence" value="ECO:0007669"/>
    <property type="project" value="TreeGrafter"/>
</dbReference>
<dbReference type="GO" id="GO:0046872">
    <property type="term" value="F:metal ion binding"/>
    <property type="evidence" value="ECO:0007669"/>
    <property type="project" value="UniProtKB-KW"/>
</dbReference>
<dbReference type="GO" id="GO:0008479">
    <property type="term" value="F:tRNA-guanosine(34) queuine transglycosylase activity"/>
    <property type="evidence" value="ECO:0007669"/>
    <property type="project" value="UniProtKB-UniRule"/>
</dbReference>
<dbReference type="GO" id="GO:0008616">
    <property type="term" value="P:queuosine biosynthetic process"/>
    <property type="evidence" value="ECO:0007669"/>
    <property type="project" value="UniProtKB-UniRule"/>
</dbReference>
<dbReference type="GO" id="GO:0002099">
    <property type="term" value="P:tRNA wobble guanine modification"/>
    <property type="evidence" value="ECO:0007669"/>
    <property type="project" value="TreeGrafter"/>
</dbReference>
<dbReference type="GO" id="GO:0101030">
    <property type="term" value="P:tRNA-guanine transglycosylation"/>
    <property type="evidence" value="ECO:0007669"/>
    <property type="project" value="InterPro"/>
</dbReference>
<dbReference type="FunFam" id="3.20.20.105:FF:000001">
    <property type="entry name" value="Queuine tRNA-ribosyltransferase"/>
    <property type="match status" value="1"/>
</dbReference>
<dbReference type="Gene3D" id="3.20.20.105">
    <property type="entry name" value="Queuine tRNA-ribosyltransferase-like"/>
    <property type="match status" value="1"/>
</dbReference>
<dbReference type="HAMAP" id="MF_00168">
    <property type="entry name" value="Q_tRNA_Tgt"/>
    <property type="match status" value="1"/>
</dbReference>
<dbReference type="InterPro" id="IPR050076">
    <property type="entry name" value="ArchSynthase1/Queuine_TRR"/>
</dbReference>
<dbReference type="InterPro" id="IPR004803">
    <property type="entry name" value="TGT"/>
</dbReference>
<dbReference type="InterPro" id="IPR036511">
    <property type="entry name" value="TGT-like_sf"/>
</dbReference>
<dbReference type="InterPro" id="IPR002616">
    <property type="entry name" value="tRNA_ribo_trans-like"/>
</dbReference>
<dbReference type="NCBIfam" id="TIGR00430">
    <property type="entry name" value="Q_tRNA_tgt"/>
    <property type="match status" value="1"/>
</dbReference>
<dbReference type="NCBIfam" id="TIGR00449">
    <property type="entry name" value="tgt_general"/>
    <property type="match status" value="1"/>
</dbReference>
<dbReference type="PANTHER" id="PTHR46499">
    <property type="entry name" value="QUEUINE TRNA-RIBOSYLTRANSFERASE"/>
    <property type="match status" value="1"/>
</dbReference>
<dbReference type="PANTHER" id="PTHR46499:SF1">
    <property type="entry name" value="QUEUINE TRNA-RIBOSYLTRANSFERASE"/>
    <property type="match status" value="1"/>
</dbReference>
<dbReference type="Pfam" id="PF01702">
    <property type="entry name" value="TGT"/>
    <property type="match status" value="1"/>
</dbReference>
<dbReference type="SUPFAM" id="SSF51713">
    <property type="entry name" value="tRNA-guanine transglycosylase"/>
    <property type="match status" value="1"/>
</dbReference>
<protein>
    <recommendedName>
        <fullName evidence="1">Queuine tRNA-ribosyltransferase</fullName>
        <ecNumber evidence="1">2.4.2.29</ecNumber>
    </recommendedName>
    <alternativeName>
        <fullName evidence="1">Guanine insertion enzyme</fullName>
    </alternativeName>
    <alternativeName>
        <fullName evidence="1">tRNA-guanine transglycosylase</fullName>
    </alternativeName>
</protein>
<proteinExistence type="inferred from homology"/>
<name>TGT_ERWT9</name>
<accession>B2VHQ1</accession>
<gene>
    <name evidence="1" type="primary">tgt</name>
    <name type="ordered locus">ETA_25390</name>
</gene>
<reference key="1">
    <citation type="journal article" date="2008" name="Environ. Microbiol.">
        <title>The genome of Erwinia tasmaniensis strain Et1/99, a non-pathogenic bacterium in the genus Erwinia.</title>
        <authorList>
            <person name="Kube M."/>
            <person name="Migdoll A.M."/>
            <person name="Mueller I."/>
            <person name="Kuhl H."/>
            <person name="Beck A."/>
            <person name="Reinhardt R."/>
            <person name="Geider K."/>
        </authorList>
    </citation>
    <scope>NUCLEOTIDE SEQUENCE [LARGE SCALE GENOMIC DNA]</scope>
    <source>
        <strain>DSM 17950 / CFBP 7177 / CIP 109463 / NCPPB 4357 / Et1/99</strain>
    </source>
</reference>
<keyword id="KW-0328">Glycosyltransferase</keyword>
<keyword id="KW-0479">Metal-binding</keyword>
<keyword id="KW-0671">Queuosine biosynthesis</keyword>
<keyword id="KW-1185">Reference proteome</keyword>
<keyword id="KW-0808">Transferase</keyword>
<keyword id="KW-0819">tRNA processing</keyword>
<keyword id="KW-0862">Zinc</keyword>